<dbReference type="EMBL" id="Y14690">
    <property type="protein sequence ID" value="CAA75002.1"/>
    <property type="molecule type" value="mRNA"/>
</dbReference>
<dbReference type="EMBL" id="AB209045">
    <property type="protein sequence ID" value="BAD92282.1"/>
    <property type="status" value="ALT_INIT"/>
    <property type="molecule type" value="mRNA"/>
</dbReference>
<dbReference type="EMBL" id="AC064833">
    <property type="status" value="NOT_ANNOTATED_CDS"/>
    <property type="molecule type" value="Genomic_DNA"/>
</dbReference>
<dbReference type="EMBL" id="AC133106">
    <property type="protein sequence ID" value="AAY24185.1"/>
    <property type="status" value="ALT_SEQ"/>
    <property type="molecule type" value="Genomic_DNA"/>
</dbReference>
<dbReference type="EMBL" id="J04478">
    <property type="protein sequence ID" value="AAA51859.1"/>
    <property type="molecule type" value="mRNA"/>
</dbReference>
<dbReference type="EMBL" id="AY016288">
    <property type="protein sequence ID" value="AAL13165.1"/>
    <property type="molecule type" value="Genomic_DNA"/>
</dbReference>
<dbReference type="EMBL" id="AY016287">
    <property type="protein sequence ID" value="AAL13165.1"/>
    <property type="status" value="JOINED"/>
    <property type="molecule type" value="Genomic_DNA"/>
</dbReference>
<dbReference type="EMBL" id="AY016295">
    <property type="protein sequence ID" value="AAL13166.1"/>
    <property type="molecule type" value="Genomic_DNA"/>
</dbReference>
<dbReference type="EMBL" id="AY016289">
    <property type="protein sequence ID" value="AAL13166.1"/>
    <property type="status" value="JOINED"/>
    <property type="molecule type" value="Genomic_DNA"/>
</dbReference>
<dbReference type="EMBL" id="AY016290">
    <property type="protein sequence ID" value="AAL13166.1"/>
    <property type="status" value="JOINED"/>
    <property type="molecule type" value="Genomic_DNA"/>
</dbReference>
<dbReference type="EMBL" id="AY016291">
    <property type="protein sequence ID" value="AAL13166.1"/>
    <property type="status" value="JOINED"/>
    <property type="molecule type" value="Genomic_DNA"/>
</dbReference>
<dbReference type="EMBL" id="AY016292">
    <property type="protein sequence ID" value="AAL13166.1"/>
    <property type="status" value="JOINED"/>
    <property type="molecule type" value="Genomic_DNA"/>
</dbReference>
<dbReference type="EMBL" id="AY016293">
    <property type="protein sequence ID" value="AAL13166.1"/>
    <property type="status" value="JOINED"/>
    <property type="molecule type" value="Genomic_DNA"/>
</dbReference>
<dbReference type="EMBL" id="AY016294">
    <property type="protein sequence ID" value="AAL13166.1"/>
    <property type="status" value="JOINED"/>
    <property type="molecule type" value="Genomic_DNA"/>
</dbReference>
<dbReference type="EMBL" id="M58529">
    <property type="protein sequence ID" value="AAC41699.1"/>
    <property type="molecule type" value="Genomic_DNA"/>
</dbReference>
<dbReference type="EMBL" id="X04758">
    <property type="protein sequence ID" value="CAA28454.1"/>
    <property type="molecule type" value="mRNA"/>
</dbReference>
<dbReference type="EMBL" id="BC043613">
    <property type="protein sequence ID" value="AAH43613.1"/>
    <property type="status" value="ALT_INIT"/>
    <property type="molecule type" value="mRNA"/>
</dbReference>
<dbReference type="EMBL" id="M10956">
    <property type="protein sequence ID" value="AAA52007.1"/>
    <property type="molecule type" value="mRNA"/>
</dbReference>
<dbReference type="EMBL" id="M11135">
    <property type="protein sequence ID" value="AAA51857.1"/>
    <property type="molecule type" value="mRNA"/>
</dbReference>
<dbReference type="EMBL" id="M11718">
    <property type="protein sequence ID" value="AAA52058.1"/>
    <property type="molecule type" value="mRNA"/>
</dbReference>
<dbReference type="EMBL" id="J03051">
    <property type="protein sequence ID" value="AAA51858.1"/>
    <property type="molecule type" value="Genomic_DNA"/>
</dbReference>
<dbReference type="CCDS" id="CCDS33350.1"/>
<dbReference type="PIR" id="A31427">
    <property type="entry name" value="CGHU2V"/>
</dbReference>
<dbReference type="RefSeq" id="NP_000384.2">
    <property type="nucleotide sequence ID" value="NM_000393.5"/>
</dbReference>
<dbReference type="SMR" id="P05997"/>
<dbReference type="BioGRID" id="107687">
    <property type="interactions" value="18"/>
</dbReference>
<dbReference type="ComplexPortal" id="CPX-1727">
    <property type="entry name" value="Collagen type V trimer variant 1"/>
</dbReference>
<dbReference type="ComplexPortal" id="CPX-1728">
    <property type="entry name" value="Collagen type V trimer variant 2"/>
</dbReference>
<dbReference type="ComplexPortal" id="CPX-1751">
    <property type="entry name" value="Collagen type XI trimer variant 2"/>
</dbReference>
<dbReference type="ComplexPortal" id="CPX-1752">
    <property type="entry name" value="Collagen type XI trimer variant 3"/>
</dbReference>
<dbReference type="FunCoup" id="P05997">
    <property type="interactions" value="186"/>
</dbReference>
<dbReference type="IntAct" id="P05997">
    <property type="interactions" value="6"/>
</dbReference>
<dbReference type="STRING" id="9606.ENSP00000364000"/>
<dbReference type="ChEMBL" id="CHEMBL2364188"/>
<dbReference type="GlyConnect" id="1136">
    <property type="glycosylation" value="6 N-Linked glycans (2 sites)"/>
</dbReference>
<dbReference type="GlyCosmos" id="P05997">
    <property type="glycosylation" value="3 sites, 7 glycans"/>
</dbReference>
<dbReference type="GlyGen" id="P05997">
    <property type="glycosylation" value="19 sites, 11 N-linked glycans (2 sites), 3 O-linked glycans (4 sites)"/>
</dbReference>
<dbReference type="iPTMnet" id="P05997"/>
<dbReference type="PhosphoSitePlus" id="P05997"/>
<dbReference type="BioMuta" id="COL5A2"/>
<dbReference type="DMDM" id="143811378"/>
<dbReference type="jPOST" id="P05997"/>
<dbReference type="MassIVE" id="P05997"/>
<dbReference type="PaxDb" id="9606-ENSP00000364000"/>
<dbReference type="PeptideAtlas" id="P05997"/>
<dbReference type="ProteomicsDB" id="51866"/>
<dbReference type="Antibodypedia" id="34019">
    <property type="antibodies" value="163 antibodies from 28 providers"/>
</dbReference>
<dbReference type="DNASU" id="1290"/>
<dbReference type="Ensembl" id="ENST00000374866.9">
    <property type="protein sequence ID" value="ENSP00000364000.3"/>
    <property type="gene ID" value="ENSG00000204262.14"/>
</dbReference>
<dbReference type="GeneID" id="1290"/>
<dbReference type="KEGG" id="hsa:1290"/>
<dbReference type="MANE-Select" id="ENST00000374866.9">
    <property type="protein sequence ID" value="ENSP00000364000.3"/>
    <property type="RefSeq nucleotide sequence ID" value="NM_000393.5"/>
    <property type="RefSeq protein sequence ID" value="NP_000384.2"/>
</dbReference>
<dbReference type="UCSC" id="uc002uqk.4">
    <property type="organism name" value="human"/>
</dbReference>
<dbReference type="AGR" id="HGNC:2210"/>
<dbReference type="CTD" id="1290"/>
<dbReference type="DisGeNET" id="1290"/>
<dbReference type="GeneCards" id="COL5A2"/>
<dbReference type="GeneReviews" id="COL5A2"/>
<dbReference type="HGNC" id="HGNC:2210">
    <property type="gene designation" value="COL5A2"/>
</dbReference>
<dbReference type="HPA" id="ENSG00000204262">
    <property type="expression patterns" value="Low tissue specificity"/>
</dbReference>
<dbReference type="MalaCards" id="COL5A2"/>
<dbReference type="MIM" id="120190">
    <property type="type" value="gene"/>
</dbReference>
<dbReference type="MIM" id="130010">
    <property type="type" value="phenotype"/>
</dbReference>
<dbReference type="neXtProt" id="NX_P05997"/>
<dbReference type="OpenTargets" id="ENSG00000204262"/>
<dbReference type="Orphanet" id="287">
    <property type="disease" value="Classical Ehlers-Danlos syndrome"/>
</dbReference>
<dbReference type="PharmGKB" id="PA26725"/>
<dbReference type="VEuPathDB" id="HostDB:ENSG00000204262"/>
<dbReference type="eggNOG" id="KOG3544">
    <property type="taxonomic scope" value="Eukaryota"/>
</dbReference>
<dbReference type="GeneTree" id="ENSGT00940000155675"/>
<dbReference type="InParanoid" id="P05997"/>
<dbReference type="OMA" id="WWTSRSP"/>
<dbReference type="OrthoDB" id="8939548at2759"/>
<dbReference type="PAN-GO" id="P05997">
    <property type="GO annotations" value="6 GO annotations based on evolutionary models"/>
</dbReference>
<dbReference type="PhylomeDB" id="P05997"/>
<dbReference type="TreeFam" id="TF344135"/>
<dbReference type="PathwayCommons" id="P05997"/>
<dbReference type="Reactome" id="R-HSA-1442490">
    <property type="pathway name" value="Collagen degradation"/>
</dbReference>
<dbReference type="Reactome" id="R-HSA-1474244">
    <property type="pathway name" value="Extracellular matrix organization"/>
</dbReference>
<dbReference type="Reactome" id="R-HSA-1650814">
    <property type="pathway name" value="Collagen biosynthesis and modifying enzymes"/>
</dbReference>
<dbReference type="Reactome" id="R-HSA-186797">
    <property type="pathway name" value="Signaling by PDGF"/>
</dbReference>
<dbReference type="Reactome" id="R-HSA-2022090">
    <property type="pathway name" value="Assembly of collagen fibrils and other multimeric structures"/>
</dbReference>
<dbReference type="Reactome" id="R-HSA-216083">
    <property type="pathway name" value="Integrin cell surface interactions"/>
</dbReference>
<dbReference type="Reactome" id="R-HSA-3000170">
    <property type="pathway name" value="Syndecan interactions"/>
</dbReference>
<dbReference type="Reactome" id="R-HSA-3000171">
    <property type="pathway name" value="Non-integrin membrane-ECM interactions"/>
</dbReference>
<dbReference type="Reactome" id="R-HSA-3000178">
    <property type="pathway name" value="ECM proteoglycans"/>
</dbReference>
<dbReference type="Reactome" id="R-HSA-419037">
    <property type="pathway name" value="NCAM1 interactions"/>
</dbReference>
<dbReference type="Reactome" id="R-HSA-8874081">
    <property type="pathway name" value="MET activates PTK2 signaling"/>
</dbReference>
<dbReference type="Reactome" id="R-HSA-8948216">
    <property type="pathway name" value="Collagen chain trimerization"/>
</dbReference>
<dbReference type="SignaLink" id="P05997"/>
<dbReference type="SIGNOR" id="P05997"/>
<dbReference type="BioGRID-ORCS" id="1290">
    <property type="hits" value="10 hits in 1146 CRISPR screens"/>
</dbReference>
<dbReference type="ChiTaRS" id="COL5A2">
    <property type="organism name" value="human"/>
</dbReference>
<dbReference type="GeneWiki" id="COL5A2"/>
<dbReference type="GenomeRNAi" id="1290"/>
<dbReference type="Pharos" id="P05997">
    <property type="development level" value="Tbio"/>
</dbReference>
<dbReference type="PRO" id="PR:P05997"/>
<dbReference type="Proteomes" id="UP000005640">
    <property type="component" value="Chromosome 2"/>
</dbReference>
<dbReference type="RNAct" id="P05997">
    <property type="molecule type" value="protein"/>
</dbReference>
<dbReference type="Bgee" id="ENSG00000204262">
    <property type="expression patterns" value="Expressed in tendon of biceps brachii and 202 other cell types or tissues"/>
</dbReference>
<dbReference type="ExpressionAtlas" id="P05997">
    <property type="expression patterns" value="baseline and differential"/>
</dbReference>
<dbReference type="GO" id="GO:0005588">
    <property type="term" value="C:collagen type V trimer"/>
    <property type="evidence" value="ECO:0000315"/>
    <property type="project" value="UniProtKB"/>
</dbReference>
<dbReference type="GO" id="GO:0005592">
    <property type="term" value="C:collagen type XI trimer"/>
    <property type="evidence" value="ECO:0000303"/>
    <property type="project" value="ComplexPortal"/>
</dbReference>
<dbReference type="GO" id="GO:0062023">
    <property type="term" value="C:collagen-containing extracellular matrix"/>
    <property type="evidence" value="ECO:0007005"/>
    <property type="project" value="BHF-UCL"/>
</dbReference>
<dbReference type="GO" id="GO:0005788">
    <property type="term" value="C:endoplasmic reticulum lumen"/>
    <property type="evidence" value="ECO:0000304"/>
    <property type="project" value="Reactome"/>
</dbReference>
<dbReference type="GO" id="GO:0031012">
    <property type="term" value="C:extracellular matrix"/>
    <property type="evidence" value="ECO:0000303"/>
    <property type="project" value="UniProtKB"/>
</dbReference>
<dbReference type="GO" id="GO:0005576">
    <property type="term" value="C:extracellular region"/>
    <property type="evidence" value="ECO:0000304"/>
    <property type="project" value="Reactome"/>
</dbReference>
<dbReference type="GO" id="GO:0005615">
    <property type="term" value="C:extracellular space"/>
    <property type="evidence" value="ECO:0000318"/>
    <property type="project" value="GO_Central"/>
</dbReference>
<dbReference type="GO" id="GO:0030020">
    <property type="term" value="F:extracellular matrix structural constituent conferring tensile strength"/>
    <property type="evidence" value="ECO:0007005"/>
    <property type="project" value="BHF-UCL"/>
</dbReference>
<dbReference type="GO" id="GO:0046872">
    <property type="term" value="F:metal ion binding"/>
    <property type="evidence" value="ECO:0007669"/>
    <property type="project" value="UniProtKB-KW"/>
</dbReference>
<dbReference type="GO" id="GO:0046332">
    <property type="term" value="F:SMAD binding"/>
    <property type="evidence" value="ECO:0007669"/>
    <property type="project" value="Ensembl"/>
</dbReference>
<dbReference type="GO" id="GO:0071230">
    <property type="term" value="P:cellular response to amino acid stimulus"/>
    <property type="evidence" value="ECO:0007669"/>
    <property type="project" value="Ensembl"/>
</dbReference>
<dbReference type="GO" id="GO:0030199">
    <property type="term" value="P:collagen fibril organization"/>
    <property type="evidence" value="ECO:0000315"/>
    <property type="project" value="UniProtKB"/>
</dbReference>
<dbReference type="GO" id="GO:0048592">
    <property type="term" value="P:eye morphogenesis"/>
    <property type="evidence" value="ECO:0000315"/>
    <property type="project" value="UniProtKB"/>
</dbReference>
<dbReference type="GO" id="GO:1903225">
    <property type="term" value="P:negative regulation of endodermal cell differentiation"/>
    <property type="evidence" value="ECO:0000314"/>
    <property type="project" value="UniProtKB"/>
</dbReference>
<dbReference type="GO" id="GO:0001501">
    <property type="term" value="P:skeletal system development"/>
    <property type="evidence" value="ECO:0007669"/>
    <property type="project" value="Ensembl"/>
</dbReference>
<dbReference type="GO" id="GO:0043588">
    <property type="term" value="P:skin development"/>
    <property type="evidence" value="ECO:0000315"/>
    <property type="project" value="UniProtKB"/>
</dbReference>
<dbReference type="FunFam" id="2.60.120.1000:FF:000001">
    <property type="entry name" value="Collagen alpha-1 type I chain"/>
    <property type="match status" value="1"/>
</dbReference>
<dbReference type="FunFam" id="2.10.70.10:FF:000013">
    <property type="entry name" value="Collagen, type I, alpha 1"/>
    <property type="match status" value="1"/>
</dbReference>
<dbReference type="Gene3D" id="2.60.120.1000">
    <property type="match status" value="1"/>
</dbReference>
<dbReference type="Gene3D" id="6.20.200.20">
    <property type="match status" value="1"/>
</dbReference>
<dbReference type="InterPro" id="IPR008160">
    <property type="entry name" value="Collagen"/>
</dbReference>
<dbReference type="InterPro" id="IPR050149">
    <property type="entry name" value="Collagen_superfamily"/>
</dbReference>
<dbReference type="InterPro" id="IPR000885">
    <property type="entry name" value="Fib_collagen_C"/>
</dbReference>
<dbReference type="InterPro" id="IPR001007">
    <property type="entry name" value="VWF_dom"/>
</dbReference>
<dbReference type="PANTHER" id="PTHR24023">
    <property type="entry name" value="COLLAGEN ALPHA"/>
    <property type="match status" value="1"/>
</dbReference>
<dbReference type="PANTHER" id="PTHR24023:SF1082">
    <property type="entry name" value="COLLAGEN TRIPLE HELIX REPEAT"/>
    <property type="match status" value="1"/>
</dbReference>
<dbReference type="Pfam" id="PF01410">
    <property type="entry name" value="COLFI"/>
    <property type="match status" value="1"/>
</dbReference>
<dbReference type="Pfam" id="PF01391">
    <property type="entry name" value="Collagen"/>
    <property type="match status" value="6"/>
</dbReference>
<dbReference type="Pfam" id="PF00093">
    <property type="entry name" value="VWC"/>
    <property type="match status" value="1"/>
</dbReference>
<dbReference type="SMART" id="SM00038">
    <property type="entry name" value="COLFI"/>
    <property type="match status" value="1"/>
</dbReference>
<dbReference type="SMART" id="SM00214">
    <property type="entry name" value="VWC"/>
    <property type="match status" value="1"/>
</dbReference>
<dbReference type="SUPFAM" id="SSF57603">
    <property type="entry name" value="FnI-like domain"/>
    <property type="match status" value="1"/>
</dbReference>
<dbReference type="PROSITE" id="PS51461">
    <property type="entry name" value="NC1_FIB"/>
    <property type="match status" value="1"/>
</dbReference>
<dbReference type="PROSITE" id="PS01208">
    <property type="entry name" value="VWFC_1"/>
    <property type="match status" value="1"/>
</dbReference>
<dbReference type="PROSITE" id="PS50184">
    <property type="entry name" value="VWFC_2"/>
    <property type="match status" value="1"/>
</dbReference>
<name>CO5A2_HUMAN</name>
<evidence type="ECO:0000250" key="1"/>
<evidence type="ECO:0000255" key="2"/>
<evidence type="ECO:0000255" key="3">
    <source>
        <dbReference type="PROSITE-ProRule" id="PRU00220"/>
    </source>
</evidence>
<evidence type="ECO:0000255" key="4">
    <source>
        <dbReference type="PROSITE-ProRule" id="PRU00793"/>
    </source>
</evidence>
<evidence type="ECO:0000256" key="5">
    <source>
        <dbReference type="SAM" id="MobiDB-lite"/>
    </source>
</evidence>
<evidence type="ECO:0000269" key="6">
    <source>
    </source>
</evidence>
<evidence type="ECO:0000269" key="7">
    <source>
    </source>
</evidence>
<evidence type="ECO:0000269" key="8">
    <source>
    </source>
</evidence>
<evidence type="ECO:0000269" key="9">
    <source>
    </source>
</evidence>
<evidence type="ECO:0000269" key="10">
    <source>
    </source>
</evidence>
<evidence type="ECO:0000269" key="11">
    <source>
    </source>
</evidence>
<evidence type="ECO:0000305" key="12"/>
<protein>
    <recommendedName>
        <fullName>Collagen alpha-2(V) chain</fullName>
    </recommendedName>
</protein>
<gene>
    <name type="primary">COL5A2</name>
</gene>
<comment type="function">
    <text evidence="1">Type V collagen is a member of group I collagen (fibrillar forming collagen). It is a minor connective tissue component of nearly ubiquitous distribution. Type V collagen binds to DNA, heparan sulfate, thrombospondin, heparin, and insulin. Type V collagen is a key determinant in the assembly of tissue-specific matrices (By similarity).</text>
</comment>
<comment type="subunit">
    <text>Trimers of two alpha 1(V) and one alpha 2(V) chains in most tissues and trimers of one alpha 1(V), one alpha 2(V), and one alpha 3(V) chains in placenta.</text>
</comment>
<comment type="subcellular location">
    <subcellularLocation>
        <location evidence="4">Secreted</location>
        <location evidence="4">Extracellular space</location>
        <location evidence="4">Extracellular matrix</location>
    </subcellularLocation>
</comment>
<comment type="domain">
    <text evidence="1">The C-terminal propeptide, also known as COLFI domain, have crucial roles in tissue growth and repair by controlling both the intracellular assembly of procollagen molecules and the extracellular assembly of collagen fibrils. It binds a calcium ion which is essential for its function (By similarity).</text>
</comment>
<comment type="PTM">
    <text evidence="7 9">Prolines at the third position of the tripeptide repeating unit (G-X-P) are hydroxylated in some or all of the chains. Probably 3-hydroxylated on Pro-919 and Pro-1156 by LEPREL1.</text>
</comment>
<comment type="disease" evidence="8 10 11">
    <disease id="DI-00437">
        <name>Ehlers-Danlos syndrome, classic type, 2</name>
        <acronym>EDSCL2</acronym>
        <description>A form of Ehlers-Danlos syndrome, a group of connective tissue disorders characterized by skin hyperextensibility, articular hypermobility, and tissue fragility. The main features of classic Ehlers-Danlos syndrome are joint hypermobility and dislocation, and fragile, bruisable skin. EDSCL2 inheritance is autosomal dominant.</description>
        <dbReference type="MIM" id="130010"/>
    </disease>
    <text>The disease is caused by variants affecting the gene represented in this entry.</text>
</comment>
<comment type="similarity">
    <text evidence="4">Belongs to the fibrillar collagen family.</text>
</comment>
<comment type="sequence caution" evidence="12">
    <conflict type="erroneous initiation">
        <sequence resource="EMBL-CDS" id="AAH43613"/>
    </conflict>
    <text>Truncated N-terminus.</text>
</comment>
<comment type="sequence caution" evidence="12">
    <conflict type="erroneous gene model prediction">
        <sequence resource="EMBL-CDS" id="AAY24185"/>
    </conflict>
</comment>
<comment type="sequence caution" evidence="12">
    <conflict type="erroneous initiation">
        <sequence resource="EMBL-CDS" id="BAD92282"/>
    </conflict>
    <text>Extended N-terminus.</text>
</comment>
<organism>
    <name type="scientific">Homo sapiens</name>
    <name type="common">Human</name>
    <dbReference type="NCBI Taxonomy" id="9606"/>
    <lineage>
        <taxon>Eukaryota</taxon>
        <taxon>Metazoa</taxon>
        <taxon>Chordata</taxon>
        <taxon>Craniata</taxon>
        <taxon>Vertebrata</taxon>
        <taxon>Euteleostomi</taxon>
        <taxon>Mammalia</taxon>
        <taxon>Eutheria</taxon>
        <taxon>Euarchontoglires</taxon>
        <taxon>Primates</taxon>
        <taxon>Haplorrhini</taxon>
        <taxon>Catarrhini</taxon>
        <taxon>Hominidae</taxon>
        <taxon>Homo</taxon>
    </lineage>
</organism>
<sequence>MMANWAEARPLLILIVLLGQFVSIKAQEEDEDEGYGEEIACTQNGQMYLNRDIWKPAPCQICVCDNGAILCDKIECQDVLDCADPVTPPGECCPVCSQTPGGGNTNFGRGRKGQKGEPGLVPVVTGIRGRPGPAGPPGSQGPRGERGPKGRPGPRGPQGIDGEPGVPGQPGAPGPPGHPSHPGPDGLSRPFSAQMAGLDEKSGLGSQVGLMPGSVGPVGPRGPQGLQGQQGGAGPTGPPGEPGDPGPMGPIGSRGPEGPPGKPGEDGEPGRNGNPGEVGFAGSPGARGFPGAPGLPGLKGHRGHKGLEGPKGEVGAPGSKGEAGPTGPMGAMGPLGPRGMPGERGRLGPQGAPGQRGAHGMPGKPGPMGPLGIPGSSGFPGNPGMKGEAGPTGARGPEGPQGQRGETGPPGPVGSPGLPGAIGTDGTPGAKGPTGSPGTSGPPGSAGPPGSPGPQGSTGPQGIRGQPGDPGVPGFKGEAGPKGEPGPHGIQGPIGPPGEEGKRGPRGDPGTVGPPGPVGERGAPGNRGFPGSDGLPGPKGAQGERGPVGSSGPKGSQGDPGRPGEPGLPGARGLTGNPGVQGPEGKLGPLGAPGEDGRPGPPGSIGIRGQPGSMGLPGPKGSSGDPGKPGEAGNAGVPGQRGAPGKDGEVGPSGPVGPPGLAGERGEQGPPGPTGFQGLPGPPGPPGEGGKPGDQGVPGDPGAVGPLGPRGERGNPGERGEPGITGLPGEKGMAGGHGPDGPKGSPGPSGTPGDTGPPGLQGMPGERGIAGTPGPKGDRGGIGEKGAEGTAGNDGARGLPGPLGPPGPAGPTGEKGEPGPRGLVGPPGSRGNPGSRGENGPTGAVGFAGPQGPDGQPGVKGEPGEPGQKGDAGSPGPQGLAGSPGPHGPNGVPGLKGGRGTQGPPGATGFPGSAGRVGPPGPAGAPGPAGPLGEPGKEGPPGLRGDPGSHGRVGDRGPAGPPGGPGDKGDPGEDGQPGPDGPPGPAGTTGQRGIVGMPGQRGERGMPGLPGPAGTPGKVGPTGATGDKGPPGPVGPPGSNGPVGEPGPEGPAGNDGTPGRDGAVGERGDRGDPGPAGLPGSQGAPGTPGPVGAPGDAGQRGDPGSRGPIGPPGRAGKRGLPGPQGPRGDKGDHGDRGDRGQKGHRGFTGLQGLPGPPGPNGEQGSAGIPGPFGPRGPPGPVGPSGKEGNPGPLGPIGPPGVRGSVGEAGPEGPPGEPGPPGPPGPPGHLTAALGDIMGHYDESMPDPLPEFTEDQAAPDDKNKTDPGVHATLKSLSSQIETMRSPDGSKKHPARTCDDLKLCHSAKQSGEYWIDPNQGSVEDAIKVYCNMETGETCISANPSSVPRKTWWASKSPDNKPVWYGLDMNRGSQFAYGDHQSPNTAITQMTFLRLLSKEASQNITYICKNSVGYMDDQAKNLKKAVVLKGANDLDIKAEGNIRFRYIVLQDTCSKRNGNVGKTVFEYRTQNVARLPIIDLAPVDVGGTDQEFGVEIGPVCFV</sequence>
<keyword id="KW-0106">Calcium</keyword>
<keyword id="KW-0176">Collagen</keyword>
<keyword id="KW-0903">Direct protein sequencing</keyword>
<keyword id="KW-0225">Disease variant</keyword>
<keyword id="KW-1015">Disulfide bond</keyword>
<keyword id="KW-0248">Ehlers-Danlos syndrome</keyword>
<keyword id="KW-0272">Extracellular matrix</keyword>
<keyword id="KW-0325">Glycoprotein</keyword>
<keyword id="KW-0379">Hydroxylation</keyword>
<keyword id="KW-0479">Metal-binding</keyword>
<keyword id="KW-1267">Proteomics identification</keyword>
<keyword id="KW-1185">Reference proteome</keyword>
<keyword id="KW-0677">Repeat</keyword>
<keyword id="KW-0964">Secreted</keyword>
<keyword id="KW-0732">Signal</keyword>
<reference key="1">
    <citation type="submission" date="1997-09" db="EMBL/GenBank/DDBJ databases">
        <authorList>
            <person name="Richards A.J."/>
        </authorList>
    </citation>
    <scope>NUCLEOTIDE SEQUENCE [MRNA]</scope>
</reference>
<reference key="2">
    <citation type="submission" date="2005-03" db="EMBL/GenBank/DDBJ databases">
        <authorList>
            <person name="Totoki Y."/>
            <person name="Toyoda A."/>
            <person name="Takeda T."/>
            <person name="Sakaki Y."/>
            <person name="Tanaka A."/>
            <person name="Yokoyama S."/>
            <person name="Ohara O."/>
            <person name="Nagase T."/>
            <person name="Kikuno R.F."/>
        </authorList>
    </citation>
    <scope>NUCLEOTIDE SEQUENCE [LARGE SCALE MRNA]</scope>
    <source>
        <tissue>Brain</tissue>
    </source>
</reference>
<reference key="3">
    <citation type="journal article" date="2005" name="Nature">
        <title>Generation and annotation of the DNA sequences of human chromosomes 2 and 4.</title>
        <authorList>
            <person name="Hillier L.W."/>
            <person name="Graves T.A."/>
            <person name="Fulton R.S."/>
            <person name="Fulton L.A."/>
            <person name="Pepin K.H."/>
            <person name="Minx P."/>
            <person name="Wagner-McPherson C."/>
            <person name="Layman D."/>
            <person name="Wylie K."/>
            <person name="Sekhon M."/>
            <person name="Becker M.C."/>
            <person name="Fewell G.A."/>
            <person name="Delehaunty K.D."/>
            <person name="Miner T.L."/>
            <person name="Nash W.E."/>
            <person name="Kremitzki C."/>
            <person name="Oddy L."/>
            <person name="Du H."/>
            <person name="Sun H."/>
            <person name="Bradshaw-Cordum H."/>
            <person name="Ali J."/>
            <person name="Carter J."/>
            <person name="Cordes M."/>
            <person name="Harris A."/>
            <person name="Isak A."/>
            <person name="van Brunt A."/>
            <person name="Nguyen C."/>
            <person name="Du F."/>
            <person name="Courtney L."/>
            <person name="Kalicki J."/>
            <person name="Ozersky P."/>
            <person name="Abbott S."/>
            <person name="Armstrong J."/>
            <person name="Belter E.A."/>
            <person name="Caruso L."/>
            <person name="Cedroni M."/>
            <person name="Cotton M."/>
            <person name="Davidson T."/>
            <person name="Desai A."/>
            <person name="Elliott G."/>
            <person name="Erb T."/>
            <person name="Fronick C."/>
            <person name="Gaige T."/>
            <person name="Haakenson W."/>
            <person name="Haglund K."/>
            <person name="Holmes A."/>
            <person name="Harkins R."/>
            <person name="Kim K."/>
            <person name="Kruchowski S.S."/>
            <person name="Strong C.M."/>
            <person name="Grewal N."/>
            <person name="Goyea E."/>
            <person name="Hou S."/>
            <person name="Levy A."/>
            <person name="Martinka S."/>
            <person name="Mead K."/>
            <person name="McLellan M.D."/>
            <person name="Meyer R."/>
            <person name="Randall-Maher J."/>
            <person name="Tomlinson C."/>
            <person name="Dauphin-Kohlberg S."/>
            <person name="Kozlowicz-Reilly A."/>
            <person name="Shah N."/>
            <person name="Swearengen-Shahid S."/>
            <person name="Snider J."/>
            <person name="Strong J.T."/>
            <person name="Thompson J."/>
            <person name="Yoakum M."/>
            <person name="Leonard S."/>
            <person name="Pearman C."/>
            <person name="Trani L."/>
            <person name="Radionenko M."/>
            <person name="Waligorski J.E."/>
            <person name="Wang C."/>
            <person name="Rock S.M."/>
            <person name="Tin-Wollam A.-M."/>
            <person name="Maupin R."/>
            <person name="Latreille P."/>
            <person name="Wendl M.C."/>
            <person name="Yang S.-P."/>
            <person name="Pohl C."/>
            <person name="Wallis J.W."/>
            <person name="Spieth J."/>
            <person name="Bieri T.A."/>
            <person name="Berkowicz N."/>
            <person name="Nelson J.O."/>
            <person name="Osborne J."/>
            <person name="Ding L."/>
            <person name="Meyer R."/>
            <person name="Sabo A."/>
            <person name="Shotland Y."/>
            <person name="Sinha P."/>
            <person name="Wohldmann P.E."/>
            <person name="Cook L.L."/>
            <person name="Hickenbotham M.T."/>
            <person name="Eldred J."/>
            <person name="Williams D."/>
            <person name="Jones T.A."/>
            <person name="She X."/>
            <person name="Ciccarelli F.D."/>
            <person name="Izaurralde E."/>
            <person name="Taylor J."/>
            <person name="Schmutz J."/>
            <person name="Myers R.M."/>
            <person name="Cox D.R."/>
            <person name="Huang X."/>
            <person name="McPherson J.D."/>
            <person name="Mardis E.R."/>
            <person name="Clifton S.W."/>
            <person name="Warren W.C."/>
            <person name="Chinwalla A.T."/>
            <person name="Eddy S.R."/>
            <person name="Marra M.A."/>
            <person name="Ovcharenko I."/>
            <person name="Furey T.S."/>
            <person name="Miller W."/>
            <person name="Eichler E.E."/>
            <person name="Bork P."/>
            <person name="Suyama M."/>
            <person name="Torrents D."/>
            <person name="Waterston R.H."/>
            <person name="Wilson R.K."/>
        </authorList>
    </citation>
    <scope>NUCLEOTIDE SEQUENCE [LARGE SCALE GENOMIC DNA]</scope>
</reference>
<reference key="4">
    <citation type="journal article" date="1989" name="J. Biol. Chem.">
        <title>Amino-terminal propeptide of human pro-alpha 2(V) collagen conforms to the structural criteria of a fibrillar procollagen molecule.</title>
        <authorList>
            <person name="Woodbury D."/>
            <person name="Benson-Chanda V."/>
            <person name="Ramirez F."/>
        </authorList>
    </citation>
    <scope>NUCLEOTIDE SEQUENCE [MRNA] OF 1-463</scope>
</reference>
<reference key="5">
    <citation type="journal article" date="2001" name="Matrix Biol.">
        <title>Genomic organization of the human COL3A1 and COL5A2 genes: COL5A2 has evolved differently than the other minor fibrillar collagen genes.</title>
        <authorList>
            <person name="Valkkila M."/>
            <person name="Melkoniemi M."/>
            <person name="Kvist L."/>
            <person name="Kuivaniemi H."/>
            <person name="Tromp G."/>
            <person name="Ala-Kokko L."/>
        </authorList>
    </citation>
    <scope>NUCLEOTIDE SEQUENCE [GENOMIC DNA] OF 1-104 AND 153-1499</scope>
</reference>
<reference key="6">
    <citation type="journal article" date="1991" name="Gene Expr.">
        <title>Homology between alpha 2(V) and alpha 1(III) collagen promoters and evidence for negatively acting elements in the alpha 2(V) first intron and 5' flanking sequences.</title>
        <authorList>
            <person name="Greenspan D.S."/>
            <person name="Lee S.T."/>
            <person name="Lee B.S."/>
            <person name="Hoffman G.G."/>
        </authorList>
    </citation>
    <scope>NUCLEOTIDE SEQUENCE [GENOMIC DNA] OF 1-32</scope>
</reference>
<reference key="7">
    <citation type="journal article" date="1992" name="Biol. Chem. Hoppe-Seyler">
        <title>Isolation of the alpha 3-chain of human type V collagen and characterization by partial sequencing.</title>
        <authorList>
            <person name="Mann K."/>
        </authorList>
    </citation>
    <scope>PROTEIN SEQUENCE OF 208-227</scope>
    <source>
        <tissue>Placenta</tissue>
    </source>
</reference>
<reference key="8">
    <citation type="journal article" date="1994" name="Eur. J. Biochem.">
        <title>Diversity in the processing events at the N-terminus of type-V collagen.</title>
        <authorList>
            <person name="Moradi-Ameli M."/>
            <person name="Rousseau J.C."/>
            <person name="Kleman J.P."/>
            <person name="Champliaud M.-F."/>
            <person name="Boutillon M.-M."/>
            <person name="Bernillon J."/>
            <person name="Wallach J.M."/>
            <person name="van der Rest M."/>
        </authorList>
    </citation>
    <scope>PROTEIN SEQUENCE OF 288-297 AND 609-620</scope>
    <scope>HYDROXYLATION AT PRO-290; PRO-293; PRO-296; PRO-611 AND PRO-617</scope>
    <source>
        <tissue>Bone</tissue>
    </source>
</reference>
<reference key="9">
    <citation type="journal article" date="1987" name="Nucleic Acids Res.">
        <title>The pro alpha 2(V) collagen gene is evolutionarily related to the major fibrillar-forming collagens.</title>
        <authorList>
            <person name="Weil D."/>
            <person name="Bernard M.P."/>
            <person name="Gargano S."/>
            <person name="Ramirez F."/>
        </authorList>
    </citation>
    <scope>NUCLEOTIDE SEQUENCE [MRNA] OF 398-1499</scope>
</reference>
<reference key="10">
    <citation type="journal article" date="2004" name="Genome Res.">
        <title>The status, quality, and expansion of the NIH full-length cDNA project: the Mammalian Gene Collection (MGC).</title>
        <authorList>
            <consortium name="The MGC Project Team"/>
        </authorList>
    </citation>
    <scope>NUCLEOTIDE SEQUENCE [LARGE SCALE MRNA] OF 878-1499</scope>
    <source>
        <tissue>Skin</tissue>
    </source>
</reference>
<reference key="11">
    <citation type="journal article" date="1985" name="J. Biol. Chem.">
        <title>Partial covalent structure of the human alpha 2 type V collagen chain.</title>
        <authorList>
            <person name="Myers J.C."/>
            <person name="Loidl H.R."/>
            <person name="Stolle C.A."/>
            <person name="Seyer J.M."/>
        </authorList>
    </citation>
    <scope>NUCLEOTIDE SEQUENCE [MRNA] OF 1005-1229</scope>
    <scope>PROTEIN SEQUENCE OF 1006-1036</scope>
</reference>
<reference key="12">
    <citation type="journal article" date="1985" name="Proc. Natl. Acad. Sci. U.S.A.">
        <title>Human alpha 1(III) and alpha 2(V) procollagen genes are located on the long arm of chromosome 2.</title>
        <authorList>
            <person name="Emanuel B.S."/>
            <person name="Cannizzaro L.A."/>
            <person name="Seyer J.M."/>
            <person name="Myers J.C."/>
        </authorList>
    </citation>
    <scope>NUCLEOTIDE SEQUENCE [MRNA] OF 1006-1037</scope>
</reference>
<reference key="13">
    <citation type="journal article" date="1985" name="J. Biol. Chem.">
        <title>Complete primary structure of the human alpha 2 type V procollagen COOH-terminal propeptide.</title>
        <authorList>
            <person name="Myers J.C."/>
            <person name="Loidl H.R."/>
            <person name="Seyer J.M."/>
            <person name="Dion A.S."/>
        </authorList>
    </citation>
    <scope>NUCLEOTIDE SEQUENCE [MRNA] OF 1230-1499</scope>
</reference>
<reference key="14">
    <citation type="journal article" date="1988" name="Genomics">
        <title>Genetic distance of two fibrillar collagen loci, COL3A1 and COL5A2, located on the long arm of human chromosome 2.</title>
        <authorList>
            <person name="Tsipouras P."/>
            <person name="Schwartz R.C."/>
            <person name="Liddell A.C."/>
            <person name="Salkeld C.S."/>
            <person name="Weil D."/>
            <person name="Ramirez F."/>
        </authorList>
    </citation>
    <scope>NUCLEOTIDE SEQUENCE [GENOMIC DNA] OF 1452-1499</scope>
</reference>
<reference key="15">
    <citation type="journal article" date="1998" name="Hum. Mol. Genet.">
        <title>Mutations of the alpha2(V) chain of type V collagen impair matrix assembly and produce Ehlers-Danlos syndrome type I.</title>
        <authorList>
            <person name="Michalickova K."/>
            <person name="Susic M."/>
            <person name="Willing M.C."/>
            <person name="Wenstrup R.J."/>
            <person name="Cole W.G."/>
        </authorList>
    </citation>
    <scope>INVOLVEMENT IN EDSCL2</scope>
</reference>
<reference key="16">
    <citation type="journal article" date="2011" name="J. Biol. Chem.">
        <title>A role for prolyl 3-hydroxylase 2 in post-translational modification of fibril-forming collagens.</title>
        <authorList>
            <person name="Fernandes R.J."/>
            <person name="Farnand A.W."/>
            <person name="Traeger G.R."/>
            <person name="Weis M.A."/>
            <person name="Eyre D.R."/>
        </authorList>
    </citation>
    <scope>HYDROXYLATION AT PRO-919 AND PRO-1156</scope>
    <scope>IDENTIFICATION BY MASS SPECTROMETRY</scope>
</reference>
<reference key="17">
    <citation type="journal article" date="1998" name="J. Med. Genet.">
        <title>A single base mutation in COL5A2 causes Ehlers-Danlos syndrome type II.</title>
        <authorList>
            <person name="Richards A.J."/>
            <person name="Martin S."/>
            <person name="Nicholls A.C."/>
            <person name="Harrison J.B."/>
            <person name="Pope F.M."/>
            <person name="Burrows N.P."/>
        </authorList>
    </citation>
    <scope>VARIANT EDSCL2 ARG-963</scope>
</reference>
<reference key="18">
    <citation type="journal article" date="2002" name="Neurology">
        <title>Sequence analysis of the COL5A2 gene in patients with spontaneous cervical artery dissections.</title>
        <authorList>
            <person name="Grond-Ginsbach C."/>
            <person name="Wigger F."/>
            <person name="Morcher M."/>
            <person name="von Pein F."/>
            <person name="Grau A."/>
            <person name="Hausser I."/>
            <person name="Brandt T."/>
        </authorList>
    </citation>
    <scope>VARIANTS ALA-512; LEU-833; SER-1230 AND VAL-1432</scope>
</reference>
<reference key="19">
    <citation type="journal article" date="2016" name="Hum. Genome Var.">
        <title>A novel missense mutation of COL5A2 in a patient with Ehlers-Danlos syndrome.</title>
        <authorList>
            <person name="Watanabe M."/>
            <person name="Nakagawa R."/>
            <person name="Naruto T."/>
            <person name="Kohmoto T."/>
            <person name="Suga K."/>
            <person name="Goji A."/>
            <person name="Kagami S."/>
            <person name="Masuda K."/>
            <person name="Imoto I."/>
        </authorList>
    </citation>
    <scope>VARIANT EDSCL2 ARG-228</scope>
</reference>
<feature type="signal peptide">
    <location>
        <begin position="1"/>
        <end position="26"/>
    </location>
</feature>
<feature type="chain" id="PRO_0000005830" description="Collagen alpha-2(V) chain">
    <location>
        <begin position="27"/>
        <end position="1229"/>
    </location>
</feature>
<feature type="propeptide" id="PRO_0000005831" description="C-terminal propeptide">
    <location>
        <begin position="1230"/>
        <end position="1499"/>
    </location>
</feature>
<feature type="domain" description="VWFC" evidence="3">
    <location>
        <begin position="39"/>
        <end position="97"/>
    </location>
</feature>
<feature type="domain" description="Fibrillar collagen NC1" evidence="4">
    <location>
        <begin position="1266"/>
        <end position="1499"/>
    </location>
</feature>
<feature type="region of interest" description="Disordered" evidence="5">
    <location>
        <begin position="104"/>
        <end position="1268"/>
    </location>
</feature>
<feature type="short sequence motif" description="Cell attachment site" evidence="2">
    <location>
        <begin position="506"/>
        <end position="508"/>
    </location>
</feature>
<feature type="short sequence motif" description="Cell attachment site" evidence="2">
    <location>
        <begin position="944"/>
        <end position="946"/>
    </location>
</feature>
<feature type="short sequence motif" description="Cell attachment site" evidence="2">
    <location>
        <begin position="1067"/>
        <end position="1069"/>
    </location>
</feature>
<feature type="short sequence motif" description="Cell attachment site" evidence="2">
    <location>
        <begin position="1070"/>
        <end position="1072"/>
    </location>
</feature>
<feature type="short sequence motif" description="Cell attachment site" evidence="2">
    <location>
        <begin position="1100"/>
        <end position="1102"/>
    </location>
</feature>
<feature type="short sequence motif" description="Cell attachment site" evidence="2">
    <location>
        <begin position="1127"/>
        <end position="1129"/>
    </location>
</feature>
<feature type="short sequence motif" description="Cell attachment site" evidence="2">
    <location>
        <begin position="1136"/>
        <end position="1138"/>
    </location>
</feature>
<feature type="compositionally biased region" description="Pro residues" evidence="5">
    <location>
        <begin position="170"/>
        <end position="182"/>
    </location>
</feature>
<feature type="compositionally biased region" description="Low complexity" evidence="5">
    <location>
        <begin position="212"/>
        <end position="227"/>
    </location>
</feature>
<feature type="compositionally biased region" description="Pro residues" evidence="5">
    <location>
        <begin position="236"/>
        <end position="248"/>
    </location>
</feature>
<feature type="compositionally biased region" description="Low complexity" evidence="5">
    <location>
        <begin position="322"/>
        <end position="340"/>
    </location>
</feature>
<feature type="compositionally biased region" description="Low complexity" evidence="5">
    <location>
        <begin position="427"/>
        <end position="443"/>
    </location>
</feature>
<feature type="compositionally biased region" description="Low complexity" evidence="5">
    <location>
        <begin position="604"/>
        <end position="626"/>
    </location>
</feature>
<feature type="compositionally biased region" description="Low complexity" evidence="5">
    <location>
        <begin position="694"/>
        <end position="709"/>
    </location>
</feature>
<feature type="compositionally biased region" description="Basic and acidic residues" evidence="5">
    <location>
        <begin position="710"/>
        <end position="721"/>
    </location>
</feature>
<feature type="compositionally biased region" description="Gly residues" evidence="5">
    <location>
        <begin position="732"/>
        <end position="741"/>
    </location>
</feature>
<feature type="compositionally biased region" description="Low complexity" evidence="5">
    <location>
        <begin position="742"/>
        <end position="758"/>
    </location>
</feature>
<feature type="compositionally biased region" description="Basic and acidic residues" evidence="5">
    <location>
        <begin position="776"/>
        <end position="787"/>
    </location>
</feature>
<feature type="compositionally biased region" description="Low complexity" evidence="5">
    <location>
        <begin position="826"/>
        <end position="841"/>
    </location>
</feature>
<feature type="compositionally biased region" description="Gly residues" evidence="5">
    <location>
        <begin position="894"/>
        <end position="903"/>
    </location>
</feature>
<feature type="compositionally biased region" description="Pro residues" evidence="5">
    <location>
        <begin position="919"/>
        <end position="929"/>
    </location>
</feature>
<feature type="compositionally biased region" description="Basic and acidic residues" evidence="5">
    <location>
        <begin position="1063"/>
        <end position="1072"/>
    </location>
</feature>
<feature type="compositionally biased region" description="Low complexity" evidence="5">
    <location>
        <begin position="1093"/>
        <end position="1114"/>
    </location>
</feature>
<feature type="compositionally biased region" description="Basic and acidic residues" evidence="5">
    <location>
        <begin position="1127"/>
        <end position="1141"/>
    </location>
</feature>
<feature type="compositionally biased region" description="Pro residues" evidence="5">
    <location>
        <begin position="1171"/>
        <end position="1181"/>
    </location>
</feature>
<feature type="compositionally biased region" description="Pro residues" evidence="5">
    <location>
        <begin position="1211"/>
        <end position="1226"/>
    </location>
</feature>
<feature type="binding site" evidence="1">
    <location>
        <position position="1314"/>
    </location>
    <ligand>
        <name>Ca(2+)</name>
        <dbReference type="ChEBI" id="CHEBI:29108"/>
    </ligand>
</feature>
<feature type="binding site" evidence="1">
    <location>
        <position position="1316"/>
    </location>
    <ligand>
        <name>Ca(2+)</name>
        <dbReference type="ChEBI" id="CHEBI:29108"/>
    </ligand>
</feature>
<feature type="binding site" evidence="1">
    <location>
        <position position="1317"/>
    </location>
    <ligand>
        <name>Ca(2+)</name>
        <dbReference type="ChEBI" id="CHEBI:29108"/>
    </ligand>
</feature>
<feature type="binding site" evidence="1">
    <location>
        <position position="1322"/>
    </location>
    <ligand>
        <name>Ca(2+)</name>
        <dbReference type="ChEBI" id="CHEBI:29108"/>
    </ligand>
</feature>
<feature type="modified residue" description="Hydroxyproline" evidence="9">
    <location>
        <position position="290"/>
    </location>
</feature>
<feature type="modified residue" description="Hydroxyproline" evidence="9">
    <location>
        <position position="293"/>
    </location>
</feature>
<feature type="modified residue" description="Hydroxyproline" evidence="9">
    <location>
        <position position="296"/>
    </location>
</feature>
<feature type="modified residue" description="Hydroxyproline" evidence="9">
    <location>
        <position position="611"/>
    </location>
</feature>
<feature type="modified residue" description="Hydroxyproline" evidence="9">
    <location>
        <position position="617"/>
    </location>
</feature>
<feature type="modified residue" description="3-hydroxyproline; partial" evidence="7">
    <location>
        <position position="919"/>
    </location>
</feature>
<feature type="modified residue" description="3-hydroxyproline; partial" evidence="7">
    <location>
        <position position="1156"/>
    </location>
</feature>
<feature type="glycosylation site" description="N-linked (GlcNAc...) asparagine" evidence="2">
    <location>
        <position position="1262"/>
    </location>
</feature>
<feature type="glycosylation site" description="N-linked (GlcNAc...) asparagine" evidence="2">
    <location>
        <position position="1400"/>
    </location>
</feature>
<feature type="disulfide bond" evidence="4">
    <location>
        <begin position="1296"/>
        <end position="1328"/>
    </location>
</feature>
<feature type="disulfide bond" evidence="4">
    <location>
        <begin position="1336"/>
        <end position="1497"/>
    </location>
</feature>
<feature type="disulfide bond" evidence="4">
    <location>
        <begin position="1405"/>
        <end position="1450"/>
    </location>
</feature>
<feature type="sequence variant" id="VAR_078424" description="In EDSCL2; dbSNP:rs2105652981." evidence="8">
    <original>G</original>
    <variation>R</variation>
    <location>
        <position position="228"/>
    </location>
</feature>
<feature type="sequence variant" id="VAR_048799" description="In dbSNP:rs35830636.">
    <original>P</original>
    <variation>S</variation>
    <location>
        <position position="460"/>
    </location>
</feature>
<feature type="sequence variant" id="VAR_057910" description="In dbSNP:rs35852101." evidence="6">
    <original>V</original>
    <variation>A</variation>
    <location>
        <position position="512"/>
    </location>
</feature>
<feature type="sequence variant" id="VAR_057911" description="In dbSNP:rs116298748." evidence="6">
    <original>P</original>
    <variation>L</variation>
    <location>
        <position position="833"/>
    </location>
</feature>
<feature type="sequence variant" id="VAR_048800" description="In dbSNP:rs6434313.">
    <original>R</original>
    <variation>P</variation>
    <location>
        <position position="956"/>
    </location>
</feature>
<feature type="sequence variant" id="VAR_013588" description="In EDSCL2; dbSNP:rs1186550791." evidence="11">
    <original>G</original>
    <variation>R</variation>
    <location>
        <position position="963"/>
    </location>
</feature>
<feature type="sequence variant" id="VAR_057912" description="In dbSNP:rs767234623." evidence="6">
    <original>T</original>
    <variation>S</variation>
    <location>
        <position position="1230"/>
    </location>
</feature>
<feature type="sequence variant" id="VAR_057913" description="In dbSNP:rs141777954." evidence="6">
    <original>D</original>
    <variation>V</variation>
    <location>
        <position position="1432"/>
    </location>
</feature>
<feature type="sequence conflict" description="In Ref. 8; AA sequence." evidence="12" ref="8">
    <original>A</original>
    <variation>P</variation>
    <location>
        <position position="292"/>
    </location>
</feature>
<feature type="sequence conflict" description="In Ref. 5; AAL13166." evidence="12" ref="5">
    <original>M</original>
    <variation>L</variation>
    <location>
        <position position="361"/>
    </location>
</feature>
<feature type="sequence conflict" description="In Ref. 1; CAA75002, 4; AAA51859 and 9; CAA28454." evidence="12" ref="1 4 9">
    <original>A</original>
    <variation>P</variation>
    <location>
        <position position="430"/>
    </location>
</feature>
<feature type="sequence conflict" description="In Ref. 1; CAA75002 and 9; CAA28454." evidence="12" ref="1 9">
    <original>IRGQ</original>
    <variation>NSGL</variation>
    <location>
        <begin position="463"/>
        <end position="466"/>
    </location>
</feature>
<feature type="sequence conflict" description="In Ref. 4; AAA51859." evidence="12" ref="4">
    <original>I</original>
    <variation>N</variation>
    <location>
        <position position="463"/>
    </location>
</feature>
<feature type="sequence conflict" description="In Ref. 1; CAA75002 and 9; CAA28454." evidence="12" ref="1 9">
    <location>
        <begin position="472"/>
        <end position="474"/>
    </location>
</feature>
<feature type="sequence conflict" description="In Ref. 1; CAA75002 and 9; CAA28454." evidence="12" ref="1 9">
    <original>V</original>
    <variation>L</variation>
    <location>
        <position position="512"/>
    </location>
</feature>
<feature type="sequence conflict" description="In Ref. 1; CAA75002 and 9; CAA28454." evidence="12" ref="1 9">
    <original>R</original>
    <variation>K</variation>
    <location>
        <position position="608"/>
    </location>
</feature>
<feature type="sequence conflict" description="In Ref. 1; CAA75002 and 9; CAA28454." evidence="12" ref="1 9">
    <original>S</original>
    <variation>T</variation>
    <location>
        <position position="613"/>
    </location>
</feature>
<feature type="sequence conflict" description="In Ref. 1; CAA75002 and 9; CAA28454." evidence="12" ref="1 9">
    <original>S</original>
    <variation>N</variation>
    <location>
        <position position="623"/>
    </location>
</feature>
<feature type="sequence conflict" description="In Ref. 1; CAA75002 and 9; CAA28454." evidence="12" ref="1 9">
    <original>A</original>
    <variation>P</variation>
    <location>
        <position position="635"/>
    </location>
</feature>
<feature type="sequence conflict" description="In Ref. 1; CAA75002 and 9; CAA28454." evidence="12" ref="1 9">
    <original>E</original>
    <variation>K</variation>
    <location>
        <position position="649"/>
    </location>
</feature>
<feature type="sequence conflict" description="In Ref. 1; CAA75002 and 9; CAA28454." evidence="12" ref="1 9">
    <original>S</original>
    <variation>Y</variation>
    <location>
        <position position="653"/>
    </location>
</feature>
<feature type="sequence conflict" description="In Ref. 1; CAA75002 and 9; CAA28454." evidence="12" ref="1 9">
    <original>V</original>
    <variation>P</variation>
    <location>
        <position position="656"/>
    </location>
</feature>
<feature type="sequence conflict" description="In Ref. 1; CAA75002 and 9; CAA28454." evidence="12" ref="1 9">
    <original>A</original>
    <variation>R</variation>
    <location>
        <position position="662"/>
    </location>
</feature>
<feature type="sequence conflict" description="In Ref. 1; CAA75002 and 9; CAA28454." evidence="12" ref="1 9">
    <original>L</original>
    <variation>H</variation>
    <location>
        <position position="679"/>
    </location>
</feature>
<feature type="sequence conflict" description="In Ref. 1; CAA75002 and 9; CAA28454." evidence="12" ref="1 9">
    <original>D</original>
    <variation>G</variation>
    <location>
        <position position="700"/>
    </location>
</feature>
<feature type="sequence conflict" description="In Ref. 1; CAA75002 and 9; CAA28454." evidence="12" ref="1 9">
    <original>R</original>
    <variation>G</variation>
    <location>
        <position position="797"/>
    </location>
</feature>
<feature type="sequence conflict" description="In Ref. 1; CAA75002 and 9; CAA28454." evidence="12" ref="1 9">
    <original>PT</original>
    <variation>LL</variation>
    <location>
        <begin position="811"/>
        <end position="812"/>
    </location>
</feature>
<feature type="sequence conflict" description="In Ref. 1; CAA75002 and 9; CAA28454." evidence="12" ref="1 9">
    <original>P</original>
    <variation>S</variation>
    <location>
        <position position="853"/>
    </location>
</feature>
<feature type="sequence conflict" description="In Ref. 1; CAA75002 and 9; CAA28454." evidence="12" ref="1 9">
    <original>L</original>
    <variation>P</variation>
    <location>
        <position position="943"/>
    </location>
</feature>
<feature type="sequence conflict" description="In Ref. 1; CAA75002 and 9; CAA28454." evidence="12" ref="1 9">
    <original>D</original>
    <variation>V</variation>
    <location>
        <position position="955"/>
    </location>
</feature>
<feature type="sequence conflict" description="In Ref. 1; CAA75002, 9; CAA28454 and 11; AAA52007." evidence="12" ref="1 9 11">
    <original>PP</original>
    <variation>HL</variation>
    <location>
        <begin position="1111"/>
        <end position="1112"/>
    </location>
</feature>
<feature type="sequence conflict" description="In Ref. 1; CAA75002, 9; CAA28454 and 11; AAA52007." evidence="12" ref="1 9 11">
    <original>I</original>
    <variation>L</variation>
    <location>
        <position position="1196"/>
    </location>
</feature>
<feature type="sequence conflict" description="In Ref. 13; AAA52058." evidence="12" ref="13">
    <original>K</original>
    <variation>T</variation>
    <location>
        <position position="1421"/>
    </location>
</feature>
<feature type="sequence conflict" description="In Ref. 13; AAA52058." evidence="12" ref="13">
    <original>F</original>
    <variation>S</variation>
    <location>
        <position position="1441"/>
    </location>
</feature>
<feature type="sequence conflict" description="In Ref. 14; AAA51858." evidence="12" ref="14">
    <original>Q</original>
    <variation>E</variation>
    <location>
        <position position="1467"/>
    </location>
</feature>
<accession>P05997</accession>
<accession>P78440</accession>
<accession>Q13908</accession>
<accession>Q53WR4</accession>
<accession>Q59GR4</accession>
<accession>Q6LDJ5</accession>
<accession>Q7KZ55</accession>
<accession>Q86XF6</accession>
<accession>Q96QB0</accession>
<accession>Q96QB3</accession>
<proteinExistence type="evidence at protein level"/>